<sequence length="132" mass="14985">MAKEFSRTQRVAQEMQKEIAIIIQREVKDPRIGMATVSGVEVSRDLAYAKVFVTFLNDNEPEQVKIAVKALQDASGFIRMMIGKAMRLRVVPELTFSYDNSLVEGMRMSNLVTNVVRNDTERRSVTGEDQED</sequence>
<feature type="chain" id="PRO_0000102662" description="Ribosome-binding factor A">
    <location>
        <begin position="1"/>
        <end position="132"/>
    </location>
</feature>
<comment type="function">
    <text evidence="1">One of several proteins that assist in the late maturation steps of the functional core of the 30S ribosomal subunit. Associates with free 30S ribosomal subunits (but not with 30S subunits that are part of 70S ribosomes or polysomes). Required for efficient processing of 16S rRNA. May interact with the 5'-terminal helix region of 16S rRNA.</text>
</comment>
<comment type="subunit">
    <text evidence="1">Monomer. Binds 30S ribosomal subunits, but not 50S ribosomal subunits or 70S ribosomes.</text>
</comment>
<comment type="subcellular location">
    <subcellularLocation>
        <location evidence="1">Cytoplasm</location>
    </subcellularLocation>
</comment>
<comment type="similarity">
    <text evidence="1">Belongs to the RbfA family.</text>
</comment>
<evidence type="ECO:0000255" key="1">
    <source>
        <dbReference type="HAMAP-Rule" id="MF_00003"/>
    </source>
</evidence>
<protein>
    <recommendedName>
        <fullName evidence="1">Ribosome-binding factor A</fullName>
    </recommendedName>
</protein>
<organism>
    <name type="scientific">Pectobacterium atrosepticum (strain SCRI 1043 / ATCC BAA-672)</name>
    <name type="common">Erwinia carotovora subsp. atroseptica</name>
    <dbReference type="NCBI Taxonomy" id="218491"/>
    <lineage>
        <taxon>Bacteria</taxon>
        <taxon>Pseudomonadati</taxon>
        <taxon>Pseudomonadota</taxon>
        <taxon>Gammaproteobacteria</taxon>
        <taxon>Enterobacterales</taxon>
        <taxon>Pectobacteriaceae</taxon>
        <taxon>Pectobacterium</taxon>
    </lineage>
</organism>
<keyword id="KW-0963">Cytoplasm</keyword>
<keyword id="KW-1185">Reference proteome</keyword>
<keyword id="KW-0690">Ribosome biogenesis</keyword>
<name>RBFA_PECAS</name>
<accession>Q6D9A4</accession>
<reference key="1">
    <citation type="journal article" date="2004" name="Proc. Natl. Acad. Sci. U.S.A.">
        <title>Genome sequence of the enterobacterial phytopathogen Erwinia carotovora subsp. atroseptica and characterization of virulence factors.</title>
        <authorList>
            <person name="Bell K.S."/>
            <person name="Sebaihia M."/>
            <person name="Pritchard L."/>
            <person name="Holden M.T.G."/>
            <person name="Hyman L.J."/>
            <person name="Holeva M.C."/>
            <person name="Thomson N.R."/>
            <person name="Bentley S.D."/>
            <person name="Churcher L.J.C."/>
            <person name="Mungall K."/>
            <person name="Atkin R."/>
            <person name="Bason N."/>
            <person name="Brooks K."/>
            <person name="Chillingworth T."/>
            <person name="Clark K."/>
            <person name="Doggett J."/>
            <person name="Fraser A."/>
            <person name="Hance Z."/>
            <person name="Hauser H."/>
            <person name="Jagels K."/>
            <person name="Moule S."/>
            <person name="Norbertczak H."/>
            <person name="Ormond D."/>
            <person name="Price C."/>
            <person name="Quail M.A."/>
            <person name="Sanders M."/>
            <person name="Walker D."/>
            <person name="Whitehead S."/>
            <person name="Salmond G.P.C."/>
            <person name="Birch P.R.J."/>
            <person name="Parkhill J."/>
            <person name="Toth I.K."/>
        </authorList>
    </citation>
    <scope>NUCLEOTIDE SEQUENCE [LARGE SCALE GENOMIC DNA]</scope>
    <source>
        <strain>SCRI 1043 / ATCC BAA-672</strain>
    </source>
</reference>
<dbReference type="EMBL" id="BX950851">
    <property type="protein sequence ID" value="CAG73628.1"/>
    <property type="molecule type" value="Genomic_DNA"/>
</dbReference>
<dbReference type="RefSeq" id="WP_005971529.1">
    <property type="nucleotide sequence ID" value="NC_004547.2"/>
</dbReference>
<dbReference type="SMR" id="Q6D9A4"/>
<dbReference type="STRING" id="218491.ECA0713"/>
<dbReference type="GeneID" id="90761996"/>
<dbReference type="KEGG" id="eca:ECA0713"/>
<dbReference type="eggNOG" id="COG0858">
    <property type="taxonomic scope" value="Bacteria"/>
</dbReference>
<dbReference type="HOGENOM" id="CLU_089475_5_0_6"/>
<dbReference type="OrthoDB" id="307788at2"/>
<dbReference type="Proteomes" id="UP000007966">
    <property type="component" value="Chromosome"/>
</dbReference>
<dbReference type="GO" id="GO:0005829">
    <property type="term" value="C:cytosol"/>
    <property type="evidence" value="ECO:0007669"/>
    <property type="project" value="TreeGrafter"/>
</dbReference>
<dbReference type="GO" id="GO:0043024">
    <property type="term" value="F:ribosomal small subunit binding"/>
    <property type="evidence" value="ECO:0007669"/>
    <property type="project" value="TreeGrafter"/>
</dbReference>
<dbReference type="GO" id="GO:0030490">
    <property type="term" value="P:maturation of SSU-rRNA"/>
    <property type="evidence" value="ECO:0007669"/>
    <property type="project" value="UniProtKB-UniRule"/>
</dbReference>
<dbReference type="FunFam" id="3.30.300.20:FF:000007">
    <property type="entry name" value="Ribosome-binding factor A"/>
    <property type="match status" value="1"/>
</dbReference>
<dbReference type="Gene3D" id="3.30.300.20">
    <property type="match status" value="1"/>
</dbReference>
<dbReference type="HAMAP" id="MF_00003">
    <property type="entry name" value="RbfA"/>
    <property type="match status" value="1"/>
</dbReference>
<dbReference type="InterPro" id="IPR015946">
    <property type="entry name" value="KH_dom-like_a/b"/>
</dbReference>
<dbReference type="InterPro" id="IPR000238">
    <property type="entry name" value="RbfA"/>
</dbReference>
<dbReference type="InterPro" id="IPR023799">
    <property type="entry name" value="RbfA_dom_sf"/>
</dbReference>
<dbReference type="InterPro" id="IPR020053">
    <property type="entry name" value="Ribosome-bd_factorA_CS"/>
</dbReference>
<dbReference type="NCBIfam" id="TIGR00082">
    <property type="entry name" value="rbfA"/>
    <property type="match status" value="1"/>
</dbReference>
<dbReference type="PANTHER" id="PTHR33515">
    <property type="entry name" value="RIBOSOME-BINDING FACTOR A, CHLOROPLASTIC-RELATED"/>
    <property type="match status" value="1"/>
</dbReference>
<dbReference type="PANTHER" id="PTHR33515:SF1">
    <property type="entry name" value="RIBOSOME-BINDING FACTOR A, CHLOROPLASTIC-RELATED"/>
    <property type="match status" value="1"/>
</dbReference>
<dbReference type="Pfam" id="PF02033">
    <property type="entry name" value="RBFA"/>
    <property type="match status" value="1"/>
</dbReference>
<dbReference type="SUPFAM" id="SSF89919">
    <property type="entry name" value="Ribosome-binding factor A, RbfA"/>
    <property type="match status" value="1"/>
</dbReference>
<dbReference type="PROSITE" id="PS01319">
    <property type="entry name" value="RBFA"/>
    <property type="match status" value="1"/>
</dbReference>
<proteinExistence type="inferred from homology"/>
<gene>
    <name evidence="1" type="primary">rbfA</name>
    <name type="ordered locus">ECA0713</name>
</gene>